<organism>
    <name type="scientific">Renibacterium salmoninarum (strain ATCC 33209 / DSM 20767 / JCM 11484 / NBRC 15589 / NCIMB 2235)</name>
    <dbReference type="NCBI Taxonomy" id="288705"/>
    <lineage>
        <taxon>Bacteria</taxon>
        <taxon>Bacillati</taxon>
        <taxon>Actinomycetota</taxon>
        <taxon>Actinomycetes</taxon>
        <taxon>Micrococcales</taxon>
        <taxon>Micrococcaceae</taxon>
        <taxon>Renibacterium</taxon>
    </lineage>
</organism>
<name>GSA_RENSM</name>
<feature type="chain" id="PRO_0000382362" description="Glutamate-1-semialdehyde 2,1-aminomutase">
    <location>
        <begin position="1"/>
        <end position="433"/>
    </location>
</feature>
<feature type="modified residue" description="N6-(pyridoxal phosphate)lysine" evidence="1">
    <location>
        <position position="269"/>
    </location>
</feature>
<proteinExistence type="inferred from homology"/>
<dbReference type="EC" id="5.4.3.8" evidence="1"/>
<dbReference type="EMBL" id="CP000910">
    <property type="protein sequence ID" value="ABY22965.1"/>
    <property type="molecule type" value="Genomic_DNA"/>
</dbReference>
<dbReference type="RefSeq" id="WP_012244651.1">
    <property type="nucleotide sequence ID" value="NC_010168.1"/>
</dbReference>
<dbReference type="SMR" id="A9WPI0"/>
<dbReference type="STRING" id="288705.RSal33209_1227"/>
<dbReference type="KEGG" id="rsa:RSal33209_1227"/>
<dbReference type="eggNOG" id="COG0001">
    <property type="taxonomic scope" value="Bacteria"/>
</dbReference>
<dbReference type="HOGENOM" id="CLU_016922_1_5_11"/>
<dbReference type="UniPathway" id="UPA00251">
    <property type="reaction ID" value="UER00317"/>
</dbReference>
<dbReference type="Proteomes" id="UP000002007">
    <property type="component" value="Chromosome"/>
</dbReference>
<dbReference type="GO" id="GO:0005737">
    <property type="term" value="C:cytoplasm"/>
    <property type="evidence" value="ECO:0007669"/>
    <property type="project" value="UniProtKB-SubCell"/>
</dbReference>
<dbReference type="GO" id="GO:0042286">
    <property type="term" value="F:glutamate-1-semialdehyde 2,1-aminomutase activity"/>
    <property type="evidence" value="ECO:0007669"/>
    <property type="project" value="UniProtKB-UniRule"/>
</dbReference>
<dbReference type="GO" id="GO:0030170">
    <property type="term" value="F:pyridoxal phosphate binding"/>
    <property type="evidence" value="ECO:0007669"/>
    <property type="project" value="InterPro"/>
</dbReference>
<dbReference type="GO" id="GO:0008483">
    <property type="term" value="F:transaminase activity"/>
    <property type="evidence" value="ECO:0007669"/>
    <property type="project" value="InterPro"/>
</dbReference>
<dbReference type="GO" id="GO:0006782">
    <property type="term" value="P:protoporphyrinogen IX biosynthetic process"/>
    <property type="evidence" value="ECO:0007669"/>
    <property type="project" value="UniProtKB-UniRule"/>
</dbReference>
<dbReference type="CDD" id="cd00610">
    <property type="entry name" value="OAT_like"/>
    <property type="match status" value="1"/>
</dbReference>
<dbReference type="FunFam" id="3.40.640.10:FF:000021">
    <property type="entry name" value="Glutamate-1-semialdehyde 2,1-aminomutase"/>
    <property type="match status" value="1"/>
</dbReference>
<dbReference type="Gene3D" id="3.90.1150.10">
    <property type="entry name" value="Aspartate Aminotransferase, domain 1"/>
    <property type="match status" value="1"/>
</dbReference>
<dbReference type="Gene3D" id="3.40.640.10">
    <property type="entry name" value="Type I PLP-dependent aspartate aminotransferase-like (Major domain)"/>
    <property type="match status" value="1"/>
</dbReference>
<dbReference type="HAMAP" id="MF_00375">
    <property type="entry name" value="HemL_aminotrans_3"/>
    <property type="match status" value="1"/>
</dbReference>
<dbReference type="InterPro" id="IPR004639">
    <property type="entry name" value="4pyrrol_synth_GluAld_NH2Trfase"/>
</dbReference>
<dbReference type="InterPro" id="IPR005814">
    <property type="entry name" value="Aminotrans_3"/>
</dbReference>
<dbReference type="InterPro" id="IPR049704">
    <property type="entry name" value="Aminotrans_3_PPA_site"/>
</dbReference>
<dbReference type="InterPro" id="IPR015424">
    <property type="entry name" value="PyrdxlP-dep_Trfase"/>
</dbReference>
<dbReference type="InterPro" id="IPR015421">
    <property type="entry name" value="PyrdxlP-dep_Trfase_major"/>
</dbReference>
<dbReference type="InterPro" id="IPR015422">
    <property type="entry name" value="PyrdxlP-dep_Trfase_small"/>
</dbReference>
<dbReference type="NCBIfam" id="TIGR00713">
    <property type="entry name" value="hemL"/>
    <property type="match status" value="1"/>
</dbReference>
<dbReference type="NCBIfam" id="NF000818">
    <property type="entry name" value="PRK00062.1"/>
    <property type="match status" value="1"/>
</dbReference>
<dbReference type="PANTHER" id="PTHR43713">
    <property type="entry name" value="GLUTAMATE-1-SEMIALDEHYDE 2,1-AMINOMUTASE"/>
    <property type="match status" value="1"/>
</dbReference>
<dbReference type="PANTHER" id="PTHR43713:SF3">
    <property type="entry name" value="GLUTAMATE-1-SEMIALDEHYDE 2,1-AMINOMUTASE 1, CHLOROPLASTIC-RELATED"/>
    <property type="match status" value="1"/>
</dbReference>
<dbReference type="Pfam" id="PF00202">
    <property type="entry name" value="Aminotran_3"/>
    <property type="match status" value="1"/>
</dbReference>
<dbReference type="SUPFAM" id="SSF53383">
    <property type="entry name" value="PLP-dependent transferases"/>
    <property type="match status" value="1"/>
</dbReference>
<dbReference type="PROSITE" id="PS00600">
    <property type="entry name" value="AA_TRANSFER_CLASS_3"/>
    <property type="match status" value="1"/>
</dbReference>
<gene>
    <name evidence="1" type="primary">hemL</name>
    <name type="ordered locus">RSal33209_1227</name>
</gene>
<keyword id="KW-0963">Cytoplasm</keyword>
<keyword id="KW-0413">Isomerase</keyword>
<keyword id="KW-0627">Porphyrin biosynthesis</keyword>
<keyword id="KW-0663">Pyridoxal phosphate</keyword>
<keyword id="KW-1185">Reference proteome</keyword>
<accession>A9WPI0</accession>
<sequence>MTSSQELFDHARELMPGGVNSPVRAFGSVGGTPRFITSAQGAYLTDADGRDYVDLVCSWGPALLGHAHPEVIAAVHAAVDRGLSFGASTPAETELAELVLGRVSAVERLRMVSTGTEATMTAVRLARGFTGRNLIVKFAGCYHGHVDSLLAAAGSGLATLAMPGSAGVTEATAAETLVLPYNDLEAVREVFAVHGGQIAAVITEAAPANMGVVEPAPGFNAGLAQITREHGALLILDEVLTGFRVGPSGYWGLTGASEGWTPDLLTFGKVVGGGLPTAALGGRADVMEYLAPFGPVYQAGTLSGNPVAMAAGVATLKAATADVYDQVDARSLELSAALSRALEAEGVQHSVQRAGNLFSVAFGVSEVRNYADAKAQETFRYAPFFHSMLDSGVYLPPSVFEAWFLSAAHDDTAMNRIFDALPSAAKAAAAATV</sequence>
<protein>
    <recommendedName>
        <fullName evidence="1">Glutamate-1-semialdehyde 2,1-aminomutase</fullName>
        <shortName evidence="1">GSA</shortName>
        <ecNumber evidence="1">5.4.3.8</ecNumber>
    </recommendedName>
    <alternativeName>
        <fullName evidence="1">Glutamate-1-semialdehyde aminotransferase</fullName>
        <shortName evidence="1">GSA-AT</shortName>
    </alternativeName>
</protein>
<comment type="catalytic activity">
    <reaction evidence="1">
        <text>(S)-4-amino-5-oxopentanoate = 5-aminolevulinate</text>
        <dbReference type="Rhea" id="RHEA:14265"/>
        <dbReference type="ChEBI" id="CHEBI:57501"/>
        <dbReference type="ChEBI" id="CHEBI:356416"/>
        <dbReference type="EC" id="5.4.3.8"/>
    </reaction>
</comment>
<comment type="cofactor">
    <cofactor evidence="1">
        <name>pyridoxal 5'-phosphate</name>
        <dbReference type="ChEBI" id="CHEBI:597326"/>
    </cofactor>
</comment>
<comment type="pathway">
    <text evidence="1">Porphyrin-containing compound metabolism; protoporphyrin-IX biosynthesis; 5-aminolevulinate from L-glutamyl-tRNA(Glu): step 2/2.</text>
</comment>
<comment type="subunit">
    <text evidence="1">Homodimer.</text>
</comment>
<comment type="subcellular location">
    <subcellularLocation>
        <location evidence="1">Cytoplasm</location>
    </subcellularLocation>
</comment>
<comment type="similarity">
    <text evidence="1">Belongs to the class-III pyridoxal-phosphate-dependent aminotransferase family. HemL subfamily.</text>
</comment>
<reference key="1">
    <citation type="journal article" date="2008" name="J. Bacteriol.">
        <title>Genome sequence of the fish pathogen Renibacterium salmoninarum suggests reductive evolution away from an environmental Arthrobacter ancestor.</title>
        <authorList>
            <person name="Wiens G.D."/>
            <person name="Rockey D.D."/>
            <person name="Wu Z."/>
            <person name="Chang J."/>
            <person name="Levy R."/>
            <person name="Crane S."/>
            <person name="Chen D.S."/>
            <person name="Capri G.R."/>
            <person name="Burnett J.R."/>
            <person name="Sudheesh P.S."/>
            <person name="Schipma M.J."/>
            <person name="Burd H."/>
            <person name="Bhattacharyya A."/>
            <person name="Rhodes L.D."/>
            <person name="Kaul R."/>
            <person name="Strom M.S."/>
        </authorList>
    </citation>
    <scope>NUCLEOTIDE SEQUENCE [LARGE SCALE GENOMIC DNA]</scope>
    <source>
        <strain>ATCC 33209 / DSM 20767 / JCM 11484 / NBRC 15589 / NCIMB 2235</strain>
    </source>
</reference>
<evidence type="ECO:0000255" key="1">
    <source>
        <dbReference type="HAMAP-Rule" id="MF_00375"/>
    </source>
</evidence>